<sequence>MARYIGPKCKLARREGTDLFLKSGVRAIESKCNIEAAPGIHGQRRGRQSDYGTQLREKQKVRRIYGVLERQFSGYYKEAAGKKGATGENLLQLLECRLDNVVYRMGFGSTRAESRQLVSHKSVSVNGKTVNVPSYQVRAGDVVAIREKAKNQLRIVQALDLCAQRGRVEWVEVDTEKKSGVFKNVPARSDLSADINESLIVELYSK</sequence>
<gene>
    <name evidence="1" type="primary">rpsD</name>
    <name type="ordered locus">PSPTO_0650</name>
</gene>
<name>RS4_PSESM</name>
<organism>
    <name type="scientific">Pseudomonas syringae pv. tomato (strain ATCC BAA-871 / DC3000)</name>
    <dbReference type="NCBI Taxonomy" id="223283"/>
    <lineage>
        <taxon>Bacteria</taxon>
        <taxon>Pseudomonadati</taxon>
        <taxon>Pseudomonadota</taxon>
        <taxon>Gammaproteobacteria</taxon>
        <taxon>Pseudomonadales</taxon>
        <taxon>Pseudomonadaceae</taxon>
        <taxon>Pseudomonas</taxon>
    </lineage>
</organism>
<feature type="chain" id="PRO_0000132440" description="Small ribosomal subunit protein uS4">
    <location>
        <begin position="1"/>
        <end position="206"/>
    </location>
</feature>
<feature type="domain" description="S4 RNA-binding" evidence="1">
    <location>
        <begin position="96"/>
        <end position="156"/>
    </location>
</feature>
<evidence type="ECO:0000255" key="1">
    <source>
        <dbReference type="HAMAP-Rule" id="MF_01306"/>
    </source>
</evidence>
<evidence type="ECO:0000305" key="2"/>
<comment type="function">
    <text evidence="1">One of the primary rRNA binding proteins, it binds directly to 16S rRNA where it nucleates assembly of the body of the 30S subunit.</text>
</comment>
<comment type="function">
    <text evidence="1">With S5 and S12 plays an important role in translational accuracy.</text>
</comment>
<comment type="subunit">
    <text evidence="1">Part of the 30S ribosomal subunit. Contacts protein S5. The interaction surface between S4 and S5 is involved in control of translational fidelity.</text>
</comment>
<comment type="similarity">
    <text evidence="1">Belongs to the universal ribosomal protein uS4 family.</text>
</comment>
<keyword id="KW-1185">Reference proteome</keyword>
<keyword id="KW-0687">Ribonucleoprotein</keyword>
<keyword id="KW-0689">Ribosomal protein</keyword>
<keyword id="KW-0694">RNA-binding</keyword>
<keyword id="KW-0699">rRNA-binding</keyword>
<accession>Q889U7</accession>
<protein>
    <recommendedName>
        <fullName evidence="1">Small ribosomal subunit protein uS4</fullName>
    </recommendedName>
    <alternativeName>
        <fullName evidence="2">30S ribosomal protein S4</fullName>
    </alternativeName>
</protein>
<reference key="1">
    <citation type="journal article" date="2003" name="Proc. Natl. Acad. Sci. U.S.A.">
        <title>The complete genome sequence of the Arabidopsis and tomato pathogen Pseudomonas syringae pv. tomato DC3000.</title>
        <authorList>
            <person name="Buell C.R."/>
            <person name="Joardar V."/>
            <person name="Lindeberg M."/>
            <person name="Selengut J."/>
            <person name="Paulsen I.T."/>
            <person name="Gwinn M.L."/>
            <person name="Dodson R.J."/>
            <person name="DeBoy R.T."/>
            <person name="Durkin A.S."/>
            <person name="Kolonay J.F."/>
            <person name="Madupu R."/>
            <person name="Daugherty S.C."/>
            <person name="Brinkac L.M."/>
            <person name="Beanan M.J."/>
            <person name="Haft D.H."/>
            <person name="Nelson W.C."/>
            <person name="Davidsen T.M."/>
            <person name="Zafar N."/>
            <person name="Zhou L."/>
            <person name="Liu J."/>
            <person name="Yuan Q."/>
            <person name="Khouri H.M."/>
            <person name="Fedorova N.B."/>
            <person name="Tran B."/>
            <person name="Russell D."/>
            <person name="Berry K.J."/>
            <person name="Utterback T.R."/>
            <person name="Van Aken S.E."/>
            <person name="Feldblyum T.V."/>
            <person name="D'Ascenzo M."/>
            <person name="Deng W.-L."/>
            <person name="Ramos A.R."/>
            <person name="Alfano J.R."/>
            <person name="Cartinhour S."/>
            <person name="Chatterjee A.K."/>
            <person name="Delaney T.P."/>
            <person name="Lazarowitz S.G."/>
            <person name="Martin G.B."/>
            <person name="Schneider D.J."/>
            <person name="Tang X."/>
            <person name="Bender C.L."/>
            <person name="White O."/>
            <person name="Fraser C.M."/>
            <person name="Collmer A."/>
        </authorList>
    </citation>
    <scope>NUCLEOTIDE SEQUENCE [LARGE SCALE GENOMIC DNA]</scope>
    <source>
        <strain>ATCC BAA-871 / DC3000</strain>
    </source>
</reference>
<proteinExistence type="inferred from homology"/>
<dbReference type="EMBL" id="AE016853">
    <property type="protein sequence ID" value="AAO54192.1"/>
    <property type="molecule type" value="Genomic_DNA"/>
</dbReference>
<dbReference type="RefSeq" id="NP_790497.1">
    <property type="nucleotide sequence ID" value="NC_004578.1"/>
</dbReference>
<dbReference type="RefSeq" id="WP_002555465.1">
    <property type="nucleotide sequence ID" value="NC_004578.1"/>
</dbReference>
<dbReference type="SMR" id="Q889U7"/>
<dbReference type="STRING" id="223283.PSPTO_0650"/>
<dbReference type="GeneID" id="96221006"/>
<dbReference type="KEGG" id="pst:PSPTO_0650"/>
<dbReference type="PATRIC" id="fig|223283.9.peg.656"/>
<dbReference type="eggNOG" id="COG0522">
    <property type="taxonomic scope" value="Bacteria"/>
</dbReference>
<dbReference type="HOGENOM" id="CLU_092403_0_2_6"/>
<dbReference type="OrthoDB" id="9803672at2"/>
<dbReference type="PhylomeDB" id="Q889U7"/>
<dbReference type="Proteomes" id="UP000002515">
    <property type="component" value="Chromosome"/>
</dbReference>
<dbReference type="GO" id="GO:0015935">
    <property type="term" value="C:small ribosomal subunit"/>
    <property type="evidence" value="ECO:0007669"/>
    <property type="project" value="InterPro"/>
</dbReference>
<dbReference type="GO" id="GO:0019843">
    <property type="term" value="F:rRNA binding"/>
    <property type="evidence" value="ECO:0007669"/>
    <property type="project" value="UniProtKB-UniRule"/>
</dbReference>
<dbReference type="GO" id="GO:0003735">
    <property type="term" value="F:structural constituent of ribosome"/>
    <property type="evidence" value="ECO:0007669"/>
    <property type="project" value="InterPro"/>
</dbReference>
<dbReference type="GO" id="GO:0042274">
    <property type="term" value="P:ribosomal small subunit biogenesis"/>
    <property type="evidence" value="ECO:0007669"/>
    <property type="project" value="TreeGrafter"/>
</dbReference>
<dbReference type="GO" id="GO:0006412">
    <property type="term" value="P:translation"/>
    <property type="evidence" value="ECO:0007669"/>
    <property type="project" value="UniProtKB-UniRule"/>
</dbReference>
<dbReference type="CDD" id="cd00165">
    <property type="entry name" value="S4"/>
    <property type="match status" value="1"/>
</dbReference>
<dbReference type="FunFam" id="1.10.1050.10:FF:000001">
    <property type="entry name" value="30S ribosomal protein S4"/>
    <property type="match status" value="1"/>
</dbReference>
<dbReference type="FunFam" id="3.10.290.10:FF:000001">
    <property type="entry name" value="30S ribosomal protein S4"/>
    <property type="match status" value="1"/>
</dbReference>
<dbReference type="Gene3D" id="1.10.1050.10">
    <property type="entry name" value="Ribosomal Protein S4 Delta 41, Chain A, domain 1"/>
    <property type="match status" value="1"/>
</dbReference>
<dbReference type="Gene3D" id="3.10.290.10">
    <property type="entry name" value="RNA-binding S4 domain"/>
    <property type="match status" value="1"/>
</dbReference>
<dbReference type="HAMAP" id="MF_01306_B">
    <property type="entry name" value="Ribosomal_uS4_B"/>
    <property type="match status" value="1"/>
</dbReference>
<dbReference type="InterPro" id="IPR022801">
    <property type="entry name" value="Ribosomal_uS4"/>
</dbReference>
<dbReference type="InterPro" id="IPR005709">
    <property type="entry name" value="Ribosomal_uS4_bac-type"/>
</dbReference>
<dbReference type="InterPro" id="IPR018079">
    <property type="entry name" value="Ribosomal_uS4_CS"/>
</dbReference>
<dbReference type="InterPro" id="IPR001912">
    <property type="entry name" value="Ribosomal_uS4_N"/>
</dbReference>
<dbReference type="InterPro" id="IPR002942">
    <property type="entry name" value="S4_RNA-bd"/>
</dbReference>
<dbReference type="InterPro" id="IPR036986">
    <property type="entry name" value="S4_RNA-bd_sf"/>
</dbReference>
<dbReference type="NCBIfam" id="NF003717">
    <property type="entry name" value="PRK05327.1"/>
    <property type="match status" value="1"/>
</dbReference>
<dbReference type="NCBIfam" id="TIGR01017">
    <property type="entry name" value="rpsD_bact"/>
    <property type="match status" value="1"/>
</dbReference>
<dbReference type="PANTHER" id="PTHR11831">
    <property type="entry name" value="30S 40S RIBOSOMAL PROTEIN"/>
    <property type="match status" value="1"/>
</dbReference>
<dbReference type="PANTHER" id="PTHR11831:SF4">
    <property type="entry name" value="SMALL RIBOSOMAL SUBUNIT PROTEIN US4M"/>
    <property type="match status" value="1"/>
</dbReference>
<dbReference type="Pfam" id="PF00163">
    <property type="entry name" value="Ribosomal_S4"/>
    <property type="match status" value="1"/>
</dbReference>
<dbReference type="Pfam" id="PF01479">
    <property type="entry name" value="S4"/>
    <property type="match status" value="1"/>
</dbReference>
<dbReference type="SMART" id="SM01390">
    <property type="entry name" value="Ribosomal_S4"/>
    <property type="match status" value="1"/>
</dbReference>
<dbReference type="SMART" id="SM00363">
    <property type="entry name" value="S4"/>
    <property type="match status" value="1"/>
</dbReference>
<dbReference type="SUPFAM" id="SSF55174">
    <property type="entry name" value="Alpha-L RNA-binding motif"/>
    <property type="match status" value="1"/>
</dbReference>
<dbReference type="PROSITE" id="PS00632">
    <property type="entry name" value="RIBOSOMAL_S4"/>
    <property type="match status" value="1"/>
</dbReference>
<dbReference type="PROSITE" id="PS50889">
    <property type="entry name" value="S4"/>
    <property type="match status" value="1"/>
</dbReference>